<name>RS3_RHIEC</name>
<gene>
    <name evidence="1" type="primary">rpsC</name>
    <name type="ordered locus">RHE_CH01681</name>
</gene>
<accession>Q2K9L0</accession>
<evidence type="ECO:0000255" key="1">
    <source>
        <dbReference type="HAMAP-Rule" id="MF_01309"/>
    </source>
</evidence>
<evidence type="ECO:0000256" key="2">
    <source>
        <dbReference type="SAM" id="MobiDB-lite"/>
    </source>
</evidence>
<evidence type="ECO:0000305" key="3"/>
<dbReference type="EMBL" id="CP000133">
    <property type="protein sequence ID" value="ABC90476.1"/>
    <property type="molecule type" value="Genomic_DNA"/>
</dbReference>
<dbReference type="RefSeq" id="WP_003573793.1">
    <property type="nucleotide sequence ID" value="NC_007761.1"/>
</dbReference>
<dbReference type="SMR" id="Q2K9L0"/>
<dbReference type="GeneID" id="91148134"/>
<dbReference type="KEGG" id="ret:RHE_CH01681"/>
<dbReference type="eggNOG" id="COG0092">
    <property type="taxonomic scope" value="Bacteria"/>
</dbReference>
<dbReference type="HOGENOM" id="CLU_058591_0_2_5"/>
<dbReference type="OrthoDB" id="9806396at2"/>
<dbReference type="Proteomes" id="UP000001936">
    <property type="component" value="Chromosome"/>
</dbReference>
<dbReference type="GO" id="GO:0022627">
    <property type="term" value="C:cytosolic small ribosomal subunit"/>
    <property type="evidence" value="ECO:0007669"/>
    <property type="project" value="TreeGrafter"/>
</dbReference>
<dbReference type="GO" id="GO:0003729">
    <property type="term" value="F:mRNA binding"/>
    <property type="evidence" value="ECO:0007669"/>
    <property type="project" value="UniProtKB-UniRule"/>
</dbReference>
<dbReference type="GO" id="GO:0019843">
    <property type="term" value="F:rRNA binding"/>
    <property type="evidence" value="ECO:0007669"/>
    <property type="project" value="UniProtKB-UniRule"/>
</dbReference>
<dbReference type="GO" id="GO:0003735">
    <property type="term" value="F:structural constituent of ribosome"/>
    <property type="evidence" value="ECO:0007669"/>
    <property type="project" value="InterPro"/>
</dbReference>
<dbReference type="GO" id="GO:0006412">
    <property type="term" value="P:translation"/>
    <property type="evidence" value="ECO:0007669"/>
    <property type="project" value="UniProtKB-UniRule"/>
</dbReference>
<dbReference type="CDD" id="cd02412">
    <property type="entry name" value="KH-II_30S_S3"/>
    <property type="match status" value="1"/>
</dbReference>
<dbReference type="FunFam" id="3.30.1140.32:FF:000001">
    <property type="entry name" value="30S ribosomal protein S3"/>
    <property type="match status" value="1"/>
</dbReference>
<dbReference type="FunFam" id="3.30.300.20:FF:000001">
    <property type="entry name" value="30S ribosomal protein S3"/>
    <property type="match status" value="1"/>
</dbReference>
<dbReference type="Gene3D" id="3.30.300.20">
    <property type="match status" value="1"/>
</dbReference>
<dbReference type="Gene3D" id="3.30.1140.32">
    <property type="entry name" value="Ribosomal protein S3, C-terminal domain"/>
    <property type="match status" value="1"/>
</dbReference>
<dbReference type="HAMAP" id="MF_01309_B">
    <property type="entry name" value="Ribosomal_uS3_B"/>
    <property type="match status" value="1"/>
</dbReference>
<dbReference type="InterPro" id="IPR004087">
    <property type="entry name" value="KH_dom"/>
</dbReference>
<dbReference type="InterPro" id="IPR015946">
    <property type="entry name" value="KH_dom-like_a/b"/>
</dbReference>
<dbReference type="InterPro" id="IPR004044">
    <property type="entry name" value="KH_dom_type_2"/>
</dbReference>
<dbReference type="InterPro" id="IPR009019">
    <property type="entry name" value="KH_sf_prok-type"/>
</dbReference>
<dbReference type="InterPro" id="IPR036419">
    <property type="entry name" value="Ribosomal_S3_C_sf"/>
</dbReference>
<dbReference type="InterPro" id="IPR005704">
    <property type="entry name" value="Ribosomal_uS3_bac-typ"/>
</dbReference>
<dbReference type="InterPro" id="IPR001351">
    <property type="entry name" value="Ribosomal_uS3_C"/>
</dbReference>
<dbReference type="InterPro" id="IPR018280">
    <property type="entry name" value="Ribosomal_uS3_CS"/>
</dbReference>
<dbReference type="NCBIfam" id="TIGR01009">
    <property type="entry name" value="rpsC_bact"/>
    <property type="match status" value="1"/>
</dbReference>
<dbReference type="PANTHER" id="PTHR11760">
    <property type="entry name" value="30S/40S RIBOSOMAL PROTEIN S3"/>
    <property type="match status" value="1"/>
</dbReference>
<dbReference type="PANTHER" id="PTHR11760:SF19">
    <property type="entry name" value="SMALL RIBOSOMAL SUBUNIT PROTEIN US3C"/>
    <property type="match status" value="1"/>
</dbReference>
<dbReference type="Pfam" id="PF07650">
    <property type="entry name" value="KH_2"/>
    <property type="match status" value="1"/>
</dbReference>
<dbReference type="Pfam" id="PF00189">
    <property type="entry name" value="Ribosomal_S3_C"/>
    <property type="match status" value="1"/>
</dbReference>
<dbReference type="SMART" id="SM00322">
    <property type="entry name" value="KH"/>
    <property type="match status" value="1"/>
</dbReference>
<dbReference type="SUPFAM" id="SSF54814">
    <property type="entry name" value="Prokaryotic type KH domain (KH-domain type II)"/>
    <property type="match status" value="1"/>
</dbReference>
<dbReference type="SUPFAM" id="SSF54821">
    <property type="entry name" value="Ribosomal protein S3 C-terminal domain"/>
    <property type="match status" value="1"/>
</dbReference>
<dbReference type="PROSITE" id="PS50823">
    <property type="entry name" value="KH_TYPE_2"/>
    <property type="match status" value="1"/>
</dbReference>
<dbReference type="PROSITE" id="PS00548">
    <property type="entry name" value="RIBOSOMAL_S3"/>
    <property type="match status" value="1"/>
</dbReference>
<organism>
    <name type="scientific">Rhizobium etli (strain ATCC 51251 / DSM 11541 / JCM 21823 / NBRC 15573 / CFN 42)</name>
    <dbReference type="NCBI Taxonomy" id="347834"/>
    <lineage>
        <taxon>Bacteria</taxon>
        <taxon>Pseudomonadati</taxon>
        <taxon>Pseudomonadota</taxon>
        <taxon>Alphaproteobacteria</taxon>
        <taxon>Hyphomicrobiales</taxon>
        <taxon>Rhizobiaceae</taxon>
        <taxon>Rhizobium/Agrobacterium group</taxon>
        <taxon>Rhizobium</taxon>
    </lineage>
</organism>
<proteinExistence type="inferred from homology"/>
<sequence>MGQKINPIGFRLGINRTWDSRWFADNAEYGQLLHEDLKMRKFVMSELKQAGISKVVIERPHKKCRVTIHSARPGLIIGRKGADIDKLRKKLSDMTNSETHLNIVEVRKPEVDATLVAQSIAQQLERRVAFRRAMKRAVQSAMRLGAEGIKITCAGRLGGAEIARTEWYREGRVPLHTLRADIDYGTAEAETAFGICGIKVWIFKGEILEHDPMASERRALEGDAQGPASRERDRGDRRRERDNA</sequence>
<comment type="function">
    <text evidence="1">Binds the lower part of the 30S subunit head. Binds mRNA in the 70S ribosome, positioning it for translation.</text>
</comment>
<comment type="subunit">
    <text evidence="1">Part of the 30S ribosomal subunit. Forms a tight complex with proteins S10 and S14.</text>
</comment>
<comment type="similarity">
    <text evidence="1">Belongs to the universal ribosomal protein uS3 family.</text>
</comment>
<feature type="chain" id="PRO_0000293863" description="Small ribosomal subunit protein uS3">
    <location>
        <begin position="1"/>
        <end position="244"/>
    </location>
</feature>
<feature type="domain" description="KH type-2" evidence="1">
    <location>
        <begin position="39"/>
        <end position="107"/>
    </location>
</feature>
<feature type="region of interest" description="Disordered" evidence="2">
    <location>
        <begin position="214"/>
        <end position="244"/>
    </location>
</feature>
<feature type="compositionally biased region" description="Basic and acidic residues" evidence="2">
    <location>
        <begin position="229"/>
        <end position="244"/>
    </location>
</feature>
<protein>
    <recommendedName>
        <fullName evidence="1">Small ribosomal subunit protein uS3</fullName>
    </recommendedName>
    <alternativeName>
        <fullName evidence="3">30S ribosomal protein S3</fullName>
    </alternativeName>
</protein>
<reference key="1">
    <citation type="journal article" date="2006" name="Proc. Natl. Acad. Sci. U.S.A.">
        <title>The partitioned Rhizobium etli genome: genetic and metabolic redundancy in seven interacting replicons.</title>
        <authorList>
            <person name="Gonzalez V."/>
            <person name="Santamaria R.I."/>
            <person name="Bustos P."/>
            <person name="Hernandez-Gonzalez I."/>
            <person name="Medrano-Soto A."/>
            <person name="Moreno-Hagelsieb G."/>
            <person name="Janga S.C."/>
            <person name="Ramirez M.A."/>
            <person name="Jimenez-Jacinto V."/>
            <person name="Collado-Vides J."/>
            <person name="Davila G."/>
        </authorList>
    </citation>
    <scope>NUCLEOTIDE SEQUENCE [LARGE SCALE GENOMIC DNA]</scope>
    <source>
        <strain>ATCC 51251 / DSM 11541 / JCM 21823 / NBRC 15573 / CFN 42</strain>
    </source>
</reference>
<keyword id="KW-1185">Reference proteome</keyword>
<keyword id="KW-0687">Ribonucleoprotein</keyword>
<keyword id="KW-0689">Ribosomal protein</keyword>
<keyword id="KW-0694">RNA-binding</keyword>
<keyword id="KW-0699">rRNA-binding</keyword>